<name>DREB_MOUSE</name>
<comment type="function">
    <text evidence="2 7">Actin cytoskeleton-organizing protein that plays a role in the formation of cell projections (By similarity). Required for actin polymerization at immunological synapses (IS) and for the recruitment of the chemokine receptor CXCR4 to IS (By similarity). Plays a role in dendritic spine morphogenesis and organization, including the localization of the dopamine receptor DRD1 to the dendritic spines (PubMed:25865831). Involved in memory-related synaptic plasticity in the hippocampus (PubMed:25865831).</text>
</comment>
<comment type="subunit">
    <text evidence="2">Interacts with RUFY3 (PubMed:24720729). Interacts with CXCR4; this interaction is enhanced by antigenic stimulation (By similarity). Interacts (via ADF-H domain) with ZMYND8 (via N-terminus); the interaction leads to sequestering of ZMYND8 in the cytoplasm (By similarity).</text>
</comment>
<comment type="subcellular location">
    <subcellularLocation>
        <location evidence="2">Cytoplasm</location>
    </subcellularLocation>
    <subcellularLocation>
        <location evidence="2">Cell projection</location>
        <location evidence="2">Dendrite</location>
    </subcellularLocation>
    <subcellularLocation>
        <location evidence="2">Cytoplasm</location>
        <location evidence="2">Cell cortex</location>
    </subcellularLocation>
    <subcellularLocation>
        <location evidence="2">Cell junction</location>
    </subcellularLocation>
    <subcellularLocation>
        <location evidence="6">Cell projection</location>
    </subcellularLocation>
    <subcellularLocation>
        <location evidence="6">Cell projection</location>
        <location evidence="6">Growth cone</location>
    </subcellularLocation>
    <text evidence="2 6">In the absence of antigen, evenly distributed throughout subcortical regions of the T-cell membrane and cytoplasm. In the presence of antigen, distributes to the immunological synapse forming at the T-cell-APC contact area, where it localizes at the peripheral and distal supramolecular activation clusters (SMAC) (By similarity). Colocalized with RUFY3 and F-actin at the transitional domain of the axonal growth cone (PubMed:24720729).</text>
</comment>
<comment type="alternative products">
    <event type="alternative splicing"/>
    <isoform>
        <id>Q9QXS6-1</id>
        <name>A</name>
        <sequence type="displayed"/>
    </isoform>
    <isoform>
        <id>Q9QXS6-2</id>
        <name>A2</name>
        <sequence type="described" ref="VSP_004199 VSP_004200"/>
    </isoform>
    <isoform>
        <id>Q9QXS6-3</id>
        <name>E2</name>
        <sequence type="described" ref="VSP_004198"/>
    </isoform>
    <text>Additional isoforms seem to exist.</text>
</comment>
<comment type="tissue specificity">
    <text evidence="5 7">Expressed in the hippocampus, with expression in the pyramidal cells of CA1, CA2 and CA3 and in the granule cells of the dentate gyrus (at protein level) (PubMed:25865831). Highly expressed in brain, also present in stomach and to a lesser degree in kidney, colon, and urinary bladder (PubMed:10633083). The E2 isoform is specifically expressed in adult stomach, kidney, and cultured cells (PubMed:10633083).</text>
</comment>
<comment type="disruption phenotype">
    <text evidence="7">Mice are born at the expected Mendelian frequency (PubMed:25865831). Mutant mice exhibit significant reduction of dendritic spine numbers, altered dendritic spine morphology with a reduction in the number of mushroom, thin and stubby types of dendritic spines, decreased protein levels of the neurotransmitter receptors DRD1, DRD2, HTR1A and 5HT7R and reduced numbers of DRD1 receptors on dendritic spines (PubMed:25865831). Inhibited memory-related high-frequency-induced synaptic strengthening (PubMed:25865831).</text>
</comment>
<organism>
    <name type="scientific">Mus musculus</name>
    <name type="common">Mouse</name>
    <dbReference type="NCBI Taxonomy" id="10090"/>
    <lineage>
        <taxon>Eukaryota</taxon>
        <taxon>Metazoa</taxon>
        <taxon>Chordata</taxon>
        <taxon>Craniata</taxon>
        <taxon>Vertebrata</taxon>
        <taxon>Euteleostomi</taxon>
        <taxon>Mammalia</taxon>
        <taxon>Eutheria</taxon>
        <taxon>Euarchontoglires</taxon>
        <taxon>Glires</taxon>
        <taxon>Rodentia</taxon>
        <taxon>Myomorpha</taxon>
        <taxon>Muroidea</taxon>
        <taxon>Muridae</taxon>
        <taxon>Murinae</taxon>
        <taxon>Mus</taxon>
        <taxon>Mus</taxon>
    </lineage>
</organism>
<proteinExistence type="evidence at protein level"/>
<sequence length="706" mass="77287">MAGVSFSGHRLELLAAYEEVIREESAADWALYTYEDGSDDLKLAASGEGGLQELSGHFENQKVMYGFCSVKDSQAALPKYVLINWVGEDVPDARKCACASHVAKVAEFFQGVDVIVNASSVEDIDAGAIGQRLSNGLARLSSPVLHRLRLREDENAEPVGTTYQKTDAAVEMKRINREQFWEQAKKEEELRKEEERKKALDARLRFEQERMEQERQEQEERERRYREREQQIEEHRRKQQSLEAEEAKRRLKEQSIFGDQRDEEEESQMKKSESEVEEAAAIIAQRPDNPREFFRQQERVASASGGSCDAPAPAPFNHRPGRPYCPFIKASDSGPSSSSSSSSSPPRTPFPYITCHRTPNLSSSLPCSHLDSHRRMAPTPIPTRSPSDSSTASTPIAEQIERALDEVTSSQPPPPPPPPPPTQEAQETTPSLDEELSKEAKVTAAPEVWAGCAAEPPQAQEPPLLQSSPLEDSMCTESPEQAALAAPAEPAASVTSVADVHAADTIETTTATTDTTIANNVTPAAASLIDLWPGNGEEASTLQAEPRVPTPPSGAEASLAEVPLLNEAAQEPLPPVGEGCANLLNFDELPEPPATFCDPEEEVGETLAASQVLTMPSALEEVDQVLEQELEPEPHLLTNGETTQKEGTQASEGYFSQSQEEEFAQSEEPCAKVPPPVFYNKPPEIDITCWDADPVPEEEEGFEGGD</sequence>
<accession>Q9QXS6</accession>
<accession>A2CG16</accession>
<accession>Q3V234</accession>
<accession>Q922X1</accession>
<accession>Q9QXS5</accession>
<gene>
    <name type="primary">Dbn1</name>
    <name type="synonym">Drba</name>
</gene>
<feature type="initiator methionine" description="Removed" evidence="8">
    <location>
        <position position="1"/>
    </location>
</feature>
<feature type="chain" id="PRO_0000080009" description="Drebrin">
    <location>
        <begin position="2"/>
        <end position="706"/>
    </location>
</feature>
<feature type="domain" description="ADF-H" evidence="3">
    <location>
        <begin position="3"/>
        <end position="134"/>
    </location>
</feature>
<feature type="region of interest" description="Disordered" evidence="4">
    <location>
        <begin position="209"/>
        <end position="497"/>
    </location>
</feature>
<feature type="region of interest" description="Disordered" evidence="4">
    <location>
        <begin position="633"/>
        <end position="677"/>
    </location>
</feature>
<feature type="compositionally biased region" description="Basic and acidic residues" evidence="4">
    <location>
        <begin position="209"/>
        <end position="236"/>
    </location>
</feature>
<feature type="compositionally biased region" description="Basic and acidic residues" evidence="4">
    <location>
        <begin position="288"/>
        <end position="298"/>
    </location>
</feature>
<feature type="compositionally biased region" description="Low complexity" evidence="4">
    <location>
        <begin position="331"/>
        <end position="345"/>
    </location>
</feature>
<feature type="compositionally biased region" description="Polar residues" evidence="4">
    <location>
        <begin position="357"/>
        <end position="366"/>
    </location>
</feature>
<feature type="compositionally biased region" description="Polar residues" evidence="4">
    <location>
        <begin position="382"/>
        <end position="396"/>
    </location>
</feature>
<feature type="compositionally biased region" description="Pro residues" evidence="4">
    <location>
        <begin position="411"/>
        <end position="422"/>
    </location>
</feature>
<feature type="compositionally biased region" description="Low complexity" evidence="4">
    <location>
        <begin position="453"/>
        <end position="497"/>
    </location>
</feature>
<feature type="compositionally biased region" description="Polar residues" evidence="4">
    <location>
        <begin position="639"/>
        <end position="651"/>
    </location>
</feature>
<feature type="modified residue" description="N-acetylalanine" evidence="8">
    <location>
        <position position="2"/>
    </location>
</feature>
<feature type="modified residue" description="Phosphoserine" evidence="2">
    <location>
        <position position="141"/>
    </location>
</feature>
<feature type="modified residue" description="Phosphoserine" evidence="2">
    <location>
        <position position="142"/>
    </location>
</feature>
<feature type="modified residue" description="Phosphoserine" evidence="14">
    <location>
        <position position="241"/>
    </location>
</feature>
<feature type="modified residue" description="Phosphoserine" evidence="1">
    <location>
        <position position="344"/>
    </location>
</feature>
<feature type="modified residue" description="Phosphothreonine" evidence="2">
    <location>
        <position position="379"/>
    </location>
</feature>
<feature type="modified residue" description="Phosphothreonine" evidence="14">
    <location>
        <position position="383"/>
    </location>
</feature>
<feature type="modified residue" description="Phosphoserine" evidence="14">
    <location>
        <position position="385"/>
    </location>
</feature>
<feature type="modified residue" description="Phosphoserine" evidence="2">
    <location>
        <position position="387"/>
    </location>
</feature>
<feature type="modified residue" description="Phosphoserine" evidence="14">
    <location>
        <position position="393"/>
    </location>
</feature>
<feature type="modified residue" description="Phosphothreonine" evidence="14">
    <location>
        <position position="394"/>
    </location>
</feature>
<feature type="modified residue" description="Phosphoserine" evidence="2">
    <location>
        <position position="468"/>
    </location>
</feature>
<feature type="modified residue" description="Phosphothreonine" evidence="2">
    <location>
        <position position="550"/>
    </location>
</feature>
<feature type="modified residue" description="Phosphoserine" evidence="14">
    <location>
        <position position="658"/>
    </location>
</feature>
<feature type="splice variant" id="VSP_004198" description="In isoform E2." evidence="9 11 12">
    <location>
        <begin position="322"/>
        <end position="367"/>
    </location>
</feature>
<feature type="splice variant" id="VSP_004199" description="In isoform A2." evidence="10">
    <original>S</original>
    <variation>R</variation>
    <location>
        <position position="368"/>
    </location>
</feature>
<feature type="splice variant" id="VSP_004200" description="In isoform A2." evidence="10">
    <location>
        <begin position="369"/>
        <end position="706"/>
    </location>
</feature>
<feature type="sequence conflict" description="In Ref. 1; AAF25189/AAF25190 and 2; BAB86904." evidence="13" ref="1 2">
    <original>K</original>
    <variation>T</variation>
    <location>
        <position position="79"/>
    </location>
</feature>
<feature type="sequence conflict" description="In Ref. 3; BAE20965." evidence="13" ref="3">
    <original>Q</original>
    <variation>QQ</variation>
    <location>
        <position position="649"/>
    </location>
</feature>
<protein>
    <recommendedName>
        <fullName>Drebrin</fullName>
    </recommendedName>
    <alternativeName>
        <fullName>Developmentally-regulated brain protein</fullName>
    </alternativeName>
</protein>
<dbReference type="EMBL" id="AF187147">
    <property type="protein sequence ID" value="AAF25189.1"/>
    <property type="molecule type" value="mRNA"/>
</dbReference>
<dbReference type="EMBL" id="AF187148">
    <property type="protein sequence ID" value="AAF25190.1"/>
    <property type="molecule type" value="mRNA"/>
</dbReference>
<dbReference type="EMBL" id="AB064321">
    <property type="protein sequence ID" value="BAB86904.1"/>
    <property type="molecule type" value="mRNA"/>
</dbReference>
<dbReference type="EMBL" id="AK132060">
    <property type="protein sequence ID" value="BAE20965.1"/>
    <property type="molecule type" value="mRNA"/>
</dbReference>
<dbReference type="EMBL" id="CT009762">
    <property type="status" value="NOT_ANNOTATED_CDS"/>
    <property type="molecule type" value="Genomic_DNA"/>
</dbReference>
<dbReference type="EMBL" id="BC006714">
    <property type="protein sequence ID" value="AAH06714.1"/>
    <property type="molecule type" value="mRNA"/>
</dbReference>
<dbReference type="EMBL" id="AB028740">
    <property type="protein sequence ID" value="BAB87811.1"/>
    <property type="molecule type" value="Genomic_DNA"/>
</dbReference>
<dbReference type="CCDS" id="CCDS36677.1">
    <molecule id="Q9QXS6-3"/>
</dbReference>
<dbReference type="CCDS" id="CCDS49274.1">
    <molecule id="Q9QXS6-1"/>
</dbReference>
<dbReference type="RefSeq" id="NP_001170842.1">
    <molecule id="Q9QXS6-1"/>
    <property type="nucleotide sequence ID" value="NM_001177371.2"/>
</dbReference>
<dbReference type="RefSeq" id="NP_001170843.1">
    <property type="nucleotide sequence ID" value="NM_001177372.1"/>
</dbReference>
<dbReference type="RefSeq" id="NP_001413607.1">
    <molecule id="Q9QXS6-1"/>
    <property type="nucleotide sequence ID" value="NM_001426678.1"/>
</dbReference>
<dbReference type="RefSeq" id="NP_062787.2">
    <molecule id="Q9QXS6-3"/>
    <property type="nucleotide sequence ID" value="NM_019813.4"/>
</dbReference>
<dbReference type="SMR" id="Q9QXS6"/>
<dbReference type="BioGRID" id="207900">
    <property type="interactions" value="38"/>
</dbReference>
<dbReference type="FunCoup" id="Q9QXS6">
    <property type="interactions" value="542"/>
</dbReference>
<dbReference type="IntAct" id="Q9QXS6">
    <property type="interactions" value="22"/>
</dbReference>
<dbReference type="MINT" id="Q9QXS6"/>
<dbReference type="STRING" id="10090.ENSMUSP00000021950"/>
<dbReference type="GlyGen" id="Q9QXS6">
    <property type="glycosylation" value="6 sites, 1 O-linked glycan (3 sites)"/>
</dbReference>
<dbReference type="iPTMnet" id="Q9QXS6"/>
<dbReference type="PhosphoSitePlus" id="Q9QXS6"/>
<dbReference type="SwissPalm" id="Q9QXS6"/>
<dbReference type="jPOST" id="Q9QXS6"/>
<dbReference type="PaxDb" id="10090-ENSMUSP00000021950"/>
<dbReference type="PeptideAtlas" id="Q9QXS6"/>
<dbReference type="ProteomicsDB" id="277496">
    <molecule id="Q9QXS6-1"/>
</dbReference>
<dbReference type="ProteomicsDB" id="277497">
    <molecule id="Q9QXS6-2"/>
</dbReference>
<dbReference type="ProteomicsDB" id="277498">
    <molecule id="Q9QXS6-3"/>
</dbReference>
<dbReference type="Pumba" id="Q9QXS6"/>
<dbReference type="Antibodypedia" id="3641">
    <property type="antibodies" value="369 antibodies from 37 providers"/>
</dbReference>
<dbReference type="DNASU" id="56320"/>
<dbReference type="Ensembl" id="ENSMUST00000021950.15">
    <molecule id="Q9QXS6-1"/>
    <property type="protein sequence ID" value="ENSMUSP00000021950.9"/>
    <property type="gene ID" value="ENSMUSG00000034675.18"/>
</dbReference>
<dbReference type="Ensembl" id="ENSMUST00000109923.9">
    <molecule id="Q9QXS6-3"/>
    <property type="protein sequence ID" value="ENSMUSP00000105549.3"/>
    <property type="gene ID" value="ENSMUSG00000034675.18"/>
</dbReference>
<dbReference type="GeneID" id="56320"/>
<dbReference type="KEGG" id="mmu:56320"/>
<dbReference type="UCSC" id="uc007qrc.2">
    <molecule id="Q9QXS6-1"/>
    <property type="organism name" value="mouse"/>
</dbReference>
<dbReference type="AGR" id="MGI:1931838"/>
<dbReference type="CTD" id="1627"/>
<dbReference type="MGI" id="MGI:1931838">
    <property type="gene designation" value="Dbn1"/>
</dbReference>
<dbReference type="VEuPathDB" id="HostDB:ENSMUSG00000034675"/>
<dbReference type="eggNOG" id="KOG3655">
    <property type="taxonomic scope" value="Eukaryota"/>
</dbReference>
<dbReference type="GeneTree" id="ENSGT00940000159431"/>
<dbReference type="HOGENOM" id="CLU_013085_3_0_1"/>
<dbReference type="InParanoid" id="Q9QXS6"/>
<dbReference type="OMA" id="EEHRWEA"/>
<dbReference type="OrthoDB" id="5971719at2759"/>
<dbReference type="PhylomeDB" id="Q9QXS6"/>
<dbReference type="TreeFam" id="TF318935"/>
<dbReference type="BioGRID-ORCS" id="56320">
    <property type="hits" value="3 hits in 78 CRISPR screens"/>
</dbReference>
<dbReference type="CD-CODE" id="CE726F99">
    <property type="entry name" value="Postsynaptic density"/>
</dbReference>
<dbReference type="ChiTaRS" id="Dbn1">
    <property type="organism name" value="mouse"/>
</dbReference>
<dbReference type="PRO" id="PR:Q9QXS6"/>
<dbReference type="Proteomes" id="UP000000589">
    <property type="component" value="Chromosome 13"/>
</dbReference>
<dbReference type="RNAct" id="Q9QXS6">
    <property type="molecule type" value="protein"/>
</dbReference>
<dbReference type="Bgee" id="ENSMUSG00000034675">
    <property type="expression patterns" value="Expressed in cortical plate and 237 other cell types or tissues"/>
</dbReference>
<dbReference type="ExpressionAtlas" id="Q9QXS6">
    <property type="expression patterns" value="baseline and differential"/>
</dbReference>
<dbReference type="GO" id="GO:0015629">
    <property type="term" value="C:actin cytoskeleton"/>
    <property type="evidence" value="ECO:0000314"/>
    <property type="project" value="MGI"/>
</dbReference>
<dbReference type="GO" id="GO:0005938">
    <property type="term" value="C:cell cortex"/>
    <property type="evidence" value="ECO:0007669"/>
    <property type="project" value="UniProtKB-SubCell"/>
</dbReference>
<dbReference type="GO" id="GO:0005911">
    <property type="term" value="C:cell-cell junction"/>
    <property type="evidence" value="ECO:0000314"/>
    <property type="project" value="MGI"/>
</dbReference>
<dbReference type="GO" id="GO:0005737">
    <property type="term" value="C:cytoplasm"/>
    <property type="evidence" value="ECO:0000250"/>
    <property type="project" value="UniProtKB"/>
</dbReference>
<dbReference type="GO" id="GO:0030425">
    <property type="term" value="C:dendrite"/>
    <property type="evidence" value="ECO:0000250"/>
    <property type="project" value="UniProtKB"/>
</dbReference>
<dbReference type="GO" id="GO:0005921">
    <property type="term" value="C:gap junction"/>
    <property type="evidence" value="ECO:0000314"/>
    <property type="project" value="MGI"/>
</dbReference>
<dbReference type="GO" id="GO:0098978">
    <property type="term" value="C:glutamatergic synapse"/>
    <property type="evidence" value="ECO:0000314"/>
    <property type="project" value="SynGO"/>
</dbReference>
<dbReference type="GO" id="GO:0030426">
    <property type="term" value="C:growth cone"/>
    <property type="evidence" value="ECO:0000314"/>
    <property type="project" value="UniProtKB"/>
</dbReference>
<dbReference type="GO" id="GO:0016020">
    <property type="term" value="C:membrane"/>
    <property type="evidence" value="ECO:0000314"/>
    <property type="project" value="MGI"/>
</dbReference>
<dbReference type="GO" id="GO:0005886">
    <property type="term" value="C:plasma membrane"/>
    <property type="evidence" value="ECO:0000314"/>
    <property type="project" value="MGI"/>
</dbReference>
<dbReference type="GO" id="GO:0099524">
    <property type="term" value="C:postsynaptic cytosol"/>
    <property type="evidence" value="ECO:0000314"/>
    <property type="project" value="SynGO"/>
</dbReference>
<dbReference type="GO" id="GO:0014069">
    <property type="term" value="C:postsynaptic density"/>
    <property type="evidence" value="ECO:0000314"/>
    <property type="project" value="SynGO"/>
</dbReference>
<dbReference type="GO" id="GO:0045211">
    <property type="term" value="C:postsynaptic membrane"/>
    <property type="evidence" value="ECO:0000314"/>
    <property type="project" value="SynGO"/>
</dbReference>
<dbReference type="GO" id="GO:0003779">
    <property type="term" value="F:actin binding"/>
    <property type="evidence" value="ECO:0007669"/>
    <property type="project" value="UniProtKB-KW"/>
</dbReference>
<dbReference type="GO" id="GO:0005522">
    <property type="term" value="F:profilin binding"/>
    <property type="evidence" value="ECO:0000250"/>
    <property type="project" value="UniProtKB"/>
</dbReference>
<dbReference type="GO" id="GO:0140311">
    <property type="term" value="F:protein sequestering activity"/>
    <property type="evidence" value="ECO:0000250"/>
    <property type="project" value="UniProtKB"/>
</dbReference>
<dbReference type="GO" id="GO:0007015">
    <property type="term" value="P:actin filament organization"/>
    <property type="evidence" value="ECO:0000314"/>
    <property type="project" value="MGI"/>
</dbReference>
<dbReference type="GO" id="GO:0010643">
    <property type="term" value="P:cell communication by chemical coupling"/>
    <property type="evidence" value="ECO:0000315"/>
    <property type="project" value="MGI"/>
</dbReference>
<dbReference type="GO" id="GO:0010644">
    <property type="term" value="P:cell communication by electrical coupling"/>
    <property type="evidence" value="ECO:0000315"/>
    <property type="project" value="MGI"/>
</dbReference>
<dbReference type="GO" id="GO:0048699">
    <property type="term" value="P:generation of neurons"/>
    <property type="evidence" value="ECO:0000270"/>
    <property type="project" value="DFLAT"/>
</dbReference>
<dbReference type="GO" id="GO:0001701">
    <property type="term" value="P:in utero embryonic development"/>
    <property type="evidence" value="ECO:0000315"/>
    <property type="project" value="MGI"/>
</dbReference>
<dbReference type="GO" id="GO:0032507">
    <property type="term" value="P:maintenance of protein location in cell"/>
    <property type="evidence" value="ECO:0000315"/>
    <property type="project" value="MGI"/>
</dbReference>
<dbReference type="GO" id="GO:0061351">
    <property type="term" value="P:neural precursor cell proliferation"/>
    <property type="evidence" value="ECO:0000270"/>
    <property type="project" value="DFLAT"/>
</dbReference>
<dbReference type="GO" id="GO:0061003">
    <property type="term" value="P:positive regulation of dendritic spine morphogenesis"/>
    <property type="evidence" value="ECO:0000315"/>
    <property type="project" value="UniProtKB"/>
</dbReference>
<dbReference type="GO" id="GO:1902685">
    <property type="term" value="P:positive regulation of receptor localization to synapse"/>
    <property type="evidence" value="ECO:0000315"/>
    <property type="project" value="UniProtKB"/>
</dbReference>
<dbReference type="GO" id="GO:0031915">
    <property type="term" value="P:positive regulation of synaptic plasticity"/>
    <property type="evidence" value="ECO:0000315"/>
    <property type="project" value="UniProtKB"/>
</dbReference>
<dbReference type="CDD" id="cd11281">
    <property type="entry name" value="ADF_drebrin_like"/>
    <property type="match status" value="1"/>
</dbReference>
<dbReference type="FunFam" id="3.40.20.10:FF:000032">
    <property type="entry name" value="Drebrin 1"/>
    <property type="match status" value="1"/>
</dbReference>
<dbReference type="Gene3D" id="3.40.20.10">
    <property type="entry name" value="Severin"/>
    <property type="match status" value="1"/>
</dbReference>
<dbReference type="InterPro" id="IPR002108">
    <property type="entry name" value="ADF-H"/>
</dbReference>
<dbReference type="InterPro" id="IPR029006">
    <property type="entry name" value="ADF-H/Gelsolin-like_dom_sf"/>
</dbReference>
<dbReference type="PANTHER" id="PTHR10829">
    <property type="entry name" value="CORTACTIN AND DREBRIN"/>
    <property type="match status" value="1"/>
</dbReference>
<dbReference type="PANTHER" id="PTHR10829:SF1">
    <property type="entry name" value="DREBRIN"/>
    <property type="match status" value="1"/>
</dbReference>
<dbReference type="Pfam" id="PF00241">
    <property type="entry name" value="Cofilin_ADF"/>
    <property type="match status" value="1"/>
</dbReference>
<dbReference type="SMART" id="SM00102">
    <property type="entry name" value="ADF"/>
    <property type="match status" value="1"/>
</dbReference>
<dbReference type="SUPFAM" id="SSF55753">
    <property type="entry name" value="Actin depolymerizing proteins"/>
    <property type="match status" value="1"/>
</dbReference>
<dbReference type="PROSITE" id="PS51263">
    <property type="entry name" value="ADF_H"/>
    <property type="match status" value="1"/>
</dbReference>
<keyword id="KW-0007">Acetylation</keyword>
<keyword id="KW-0009">Actin-binding</keyword>
<keyword id="KW-0025">Alternative splicing</keyword>
<keyword id="KW-0965">Cell junction</keyword>
<keyword id="KW-0966">Cell projection</keyword>
<keyword id="KW-0963">Cytoplasm</keyword>
<keyword id="KW-0217">Developmental protein</keyword>
<keyword id="KW-0221">Differentiation</keyword>
<keyword id="KW-0903">Direct protein sequencing</keyword>
<keyword id="KW-0524">Neurogenesis</keyword>
<keyword id="KW-0597">Phosphoprotein</keyword>
<keyword id="KW-1185">Reference proteome</keyword>
<reference key="1">
    <citation type="journal article" date="2000" name="J. Cell Sci.">
        <title>Isoform specific expression of the neuronal F-actin binding protein, drebrin, in specialized cells of stomach and kidney epithelia.</title>
        <authorList>
            <person name="Keon B.H."/>
            <person name="Jedrzejewski P.T."/>
            <person name="Paul D.L."/>
            <person name="Goodenough D.A."/>
        </authorList>
    </citation>
    <scope>NUCLEOTIDE SEQUENCE [MRNA] (ISOFORMS A AND E2)</scope>
    <scope>TISSUE SPECIFICITY</scope>
    <source>
        <strain>129/Sv</strain>
    </source>
</reference>
<reference key="2">
    <citation type="journal article" date="2002" name="Genomics">
        <title>A novel, brain-specific mouse drebrin: cDNA cloning, chromosomal mapping, genomic structure, expression, and functional characterization.</title>
        <authorList>
            <person name="Jin M."/>
            <person name="Tanaka S."/>
            <person name="Sekino Y."/>
            <person name="Ren Y."/>
            <person name="Yamazaki H."/>
            <person name="Kawai-Hirai R."/>
            <person name="Kojima N."/>
            <person name="Shirao T."/>
        </authorList>
    </citation>
    <scope>NUCLEOTIDE SEQUENCE [MRNA] (ISOFORM A2)</scope>
    <source>
        <strain>ICR</strain>
    </source>
</reference>
<reference key="3">
    <citation type="journal article" date="2005" name="Science">
        <title>The transcriptional landscape of the mammalian genome.</title>
        <authorList>
            <person name="Carninci P."/>
            <person name="Kasukawa T."/>
            <person name="Katayama S."/>
            <person name="Gough J."/>
            <person name="Frith M.C."/>
            <person name="Maeda N."/>
            <person name="Oyama R."/>
            <person name="Ravasi T."/>
            <person name="Lenhard B."/>
            <person name="Wells C."/>
            <person name="Kodzius R."/>
            <person name="Shimokawa K."/>
            <person name="Bajic V.B."/>
            <person name="Brenner S.E."/>
            <person name="Batalov S."/>
            <person name="Forrest A.R."/>
            <person name="Zavolan M."/>
            <person name="Davis M.J."/>
            <person name="Wilming L.G."/>
            <person name="Aidinis V."/>
            <person name="Allen J.E."/>
            <person name="Ambesi-Impiombato A."/>
            <person name="Apweiler R."/>
            <person name="Aturaliya R.N."/>
            <person name="Bailey T.L."/>
            <person name="Bansal M."/>
            <person name="Baxter L."/>
            <person name="Beisel K.W."/>
            <person name="Bersano T."/>
            <person name="Bono H."/>
            <person name="Chalk A.M."/>
            <person name="Chiu K.P."/>
            <person name="Choudhary V."/>
            <person name="Christoffels A."/>
            <person name="Clutterbuck D.R."/>
            <person name="Crowe M.L."/>
            <person name="Dalla E."/>
            <person name="Dalrymple B.P."/>
            <person name="de Bono B."/>
            <person name="Della Gatta G."/>
            <person name="di Bernardo D."/>
            <person name="Down T."/>
            <person name="Engstrom P."/>
            <person name="Fagiolini M."/>
            <person name="Faulkner G."/>
            <person name="Fletcher C.F."/>
            <person name="Fukushima T."/>
            <person name="Furuno M."/>
            <person name="Futaki S."/>
            <person name="Gariboldi M."/>
            <person name="Georgii-Hemming P."/>
            <person name="Gingeras T.R."/>
            <person name="Gojobori T."/>
            <person name="Green R.E."/>
            <person name="Gustincich S."/>
            <person name="Harbers M."/>
            <person name="Hayashi Y."/>
            <person name="Hensch T.K."/>
            <person name="Hirokawa N."/>
            <person name="Hill D."/>
            <person name="Huminiecki L."/>
            <person name="Iacono M."/>
            <person name="Ikeo K."/>
            <person name="Iwama A."/>
            <person name="Ishikawa T."/>
            <person name="Jakt M."/>
            <person name="Kanapin A."/>
            <person name="Katoh M."/>
            <person name="Kawasawa Y."/>
            <person name="Kelso J."/>
            <person name="Kitamura H."/>
            <person name="Kitano H."/>
            <person name="Kollias G."/>
            <person name="Krishnan S.P."/>
            <person name="Kruger A."/>
            <person name="Kummerfeld S.K."/>
            <person name="Kurochkin I.V."/>
            <person name="Lareau L.F."/>
            <person name="Lazarevic D."/>
            <person name="Lipovich L."/>
            <person name="Liu J."/>
            <person name="Liuni S."/>
            <person name="McWilliam S."/>
            <person name="Madan Babu M."/>
            <person name="Madera M."/>
            <person name="Marchionni L."/>
            <person name="Matsuda H."/>
            <person name="Matsuzawa S."/>
            <person name="Miki H."/>
            <person name="Mignone F."/>
            <person name="Miyake S."/>
            <person name="Morris K."/>
            <person name="Mottagui-Tabar S."/>
            <person name="Mulder N."/>
            <person name="Nakano N."/>
            <person name="Nakauchi H."/>
            <person name="Ng P."/>
            <person name="Nilsson R."/>
            <person name="Nishiguchi S."/>
            <person name="Nishikawa S."/>
            <person name="Nori F."/>
            <person name="Ohara O."/>
            <person name="Okazaki Y."/>
            <person name="Orlando V."/>
            <person name="Pang K.C."/>
            <person name="Pavan W.J."/>
            <person name="Pavesi G."/>
            <person name="Pesole G."/>
            <person name="Petrovsky N."/>
            <person name="Piazza S."/>
            <person name="Reed J."/>
            <person name="Reid J.F."/>
            <person name="Ring B.Z."/>
            <person name="Ringwald M."/>
            <person name="Rost B."/>
            <person name="Ruan Y."/>
            <person name="Salzberg S.L."/>
            <person name="Sandelin A."/>
            <person name="Schneider C."/>
            <person name="Schoenbach C."/>
            <person name="Sekiguchi K."/>
            <person name="Semple C.A."/>
            <person name="Seno S."/>
            <person name="Sessa L."/>
            <person name="Sheng Y."/>
            <person name="Shibata Y."/>
            <person name="Shimada H."/>
            <person name="Shimada K."/>
            <person name="Silva D."/>
            <person name="Sinclair B."/>
            <person name="Sperling S."/>
            <person name="Stupka E."/>
            <person name="Sugiura K."/>
            <person name="Sultana R."/>
            <person name="Takenaka Y."/>
            <person name="Taki K."/>
            <person name="Tammoja K."/>
            <person name="Tan S.L."/>
            <person name="Tang S."/>
            <person name="Taylor M.S."/>
            <person name="Tegner J."/>
            <person name="Teichmann S.A."/>
            <person name="Ueda H.R."/>
            <person name="van Nimwegen E."/>
            <person name="Verardo R."/>
            <person name="Wei C.L."/>
            <person name="Yagi K."/>
            <person name="Yamanishi H."/>
            <person name="Zabarovsky E."/>
            <person name="Zhu S."/>
            <person name="Zimmer A."/>
            <person name="Hide W."/>
            <person name="Bult C."/>
            <person name="Grimmond S.M."/>
            <person name="Teasdale R.D."/>
            <person name="Liu E.T."/>
            <person name="Brusic V."/>
            <person name="Quackenbush J."/>
            <person name="Wahlestedt C."/>
            <person name="Mattick J.S."/>
            <person name="Hume D.A."/>
            <person name="Kai C."/>
            <person name="Sasaki D."/>
            <person name="Tomaru Y."/>
            <person name="Fukuda S."/>
            <person name="Kanamori-Katayama M."/>
            <person name="Suzuki M."/>
            <person name="Aoki J."/>
            <person name="Arakawa T."/>
            <person name="Iida J."/>
            <person name="Imamura K."/>
            <person name="Itoh M."/>
            <person name="Kato T."/>
            <person name="Kawaji H."/>
            <person name="Kawagashira N."/>
            <person name="Kawashima T."/>
            <person name="Kojima M."/>
            <person name="Kondo S."/>
            <person name="Konno H."/>
            <person name="Nakano K."/>
            <person name="Ninomiya N."/>
            <person name="Nishio T."/>
            <person name="Okada M."/>
            <person name="Plessy C."/>
            <person name="Shibata K."/>
            <person name="Shiraki T."/>
            <person name="Suzuki S."/>
            <person name="Tagami M."/>
            <person name="Waki K."/>
            <person name="Watahiki A."/>
            <person name="Okamura-Oho Y."/>
            <person name="Suzuki H."/>
            <person name="Kawai J."/>
            <person name="Hayashizaki Y."/>
        </authorList>
    </citation>
    <scope>NUCLEOTIDE SEQUENCE [LARGE SCALE MRNA] (ISOFORM E2)</scope>
    <source>
        <strain>C57BL/6J</strain>
        <tissue>Embryonic head</tissue>
    </source>
</reference>
<reference key="4">
    <citation type="journal article" date="2009" name="PLoS Biol.">
        <title>Lineage-specific biology revealed by a finished genome assembly of the mouse.</title>
        <authorList>
            <person name="Church D.M."/>
            <person name="Goodstadt L."/>
            <person name="Hillier L.W."/>
            <person name="Zody M.C."/>
            <person name="Goldstein S."/>
            <person name="She X."/>
            <person name="Bult C.J."/>
            <person name="Agarwala R."/>
            <person name="Cherry J.L."/>
            <person name="DiCuccio M."/>
            <person name="Hlavina W."/>
            <person name="Kapustin Y."/>
            <person name="Meric P."/>
            <person name="Maglott D."/>
            <person name="Birtle Z."/>
            <person name="Marques A.C."/>
            <person name="Graves T."/>
            <person name="Zhou S."/>
            <person name="Teague B."/>
            <person name="Potamousis K."/>
            <person name="Churas C."/>
            <person name="Place M."/>
            <person name="Herschleb J."/>
            <person name="Runnheim R."/>
            <person name="Forrest D."/>
            <person name="Amos-Landgraf J."/>
            <person name="Schwartz D.C."/>
            <person name="Cheng Z."/>
            <person name="Lindblad-Toh K."/>
            <person name="Eichler E.E."/>
            <person name="Ponting C.P."/>
        </authorList>
    </citation>
    <scope>NUCLEOTIDE SEQUENCE [LARGE SCALE GENOMIC DNA]</scope>
    <source>
        <strain>C57BL/6J</strain>
    </source>
</reference>
<reference key="5">
    <citation type="journal article" date="2004" name="Genome Res.">
        <title>The status, quality, and expansion of the NIH full-length cDNA project: the Mammalian Gene Collection (MGC).</title>
        <authorList>
            <consortium name="The MGC Project Team"/>
        </authorList>
    </citation>
    <scope>NUCLEOTIDE SEQUENCE [LARGE SCALE MRNA] (ISOFORM E2)</scope>
    <source>
        <strain>FVB/N</strain>
        <tissue>Mammary gland</tissue>
    </source>
</reference>
<reference key="6">
    <citation type="submission" date="1999-06" db="EMBL/GenBank/DDBJ databases">
        <title>Mouse genome for drebrin.</title>
        <authorList>
            <person name="Shirao T."/>
            <person name="Kawai-Hirai R."/>
        </authorList>
    </citation>
    <scope>NUCLEOTIDE SEQUENCE [GENOMIC DNA] OF 1-683 (ISOFORM A)</scope>
    <source>
        <strain>C57BL/6 X CBA</strain>
    </source>
</reference>
<reference key="7">
    <citation type="submission" date="2008-02" db="UniProtKB">
        <authorList>
            <person name="Bienvenut W.V."/>
            <person name="Serrels B."/>
            <person name="Brunton V.G."/>
            <person name="Frame M.C."/>
        </authorList>
    </citation>
    <scope>PROTEIN SEQUENCE OF 2-10; 43-71; 140-147; 150-165; 178-185; 272-291 AND 376-402</scope>
    <scope>CLEAVAGE OF INITIATOR METHIONINE</scope>
    <scope>ACETYLATION AT ALA-2</scope>
    <scope>IDENTIFICATION BY MASS SPECTROMETRY</scope>
    <source>
        <tissue>Embryonic fibroblast</tissue>
    </source>
</reference>
<reference key="8">
    <citation type="journal article" date="2004" name="Mol. Cell. Proteomics">
        <title>Phosphoproteomic analysis of the developing mouse brain.</title>
        <authorList>
            <person name="Ballif B.A."/>
            <person name="Villen J."/>
            <person name="Beausoleil S.A."/>
            <person name="Schwartz D."/>
            <person name="Gygi S.P."/>
        </authorList>
    </citation>
    <scope>IDENTIFICATION BY MASS SPECTROMETRY [LARGE SCALE ANALYSIS]</scope>
    <source>
        <tissue>Embryonic brain</tissue>
    </source>
</reference>
<reference key="9">
    <citation type="journal article" date="2006" name="Mol. Cell. Proteomics">
        <title>Comprehensive identification of phosphorylation sites in postsynaptic density preparations.</title>
        <authorList>
            <person name="Trinidad J.C."/>
            <person name="Specht C.G."/>
            <person name="Thalhammer A."/>
            <person name="Schoepfer R."/>
            <person name="Burlingame A.L."/>
        </authorList>
    </citation>
    <scope>IDENTIFICATION BY MASS SPECTROMETRY [LARGE SCALE ANALYSIS]</scope>
    <source>
        <tissue>Brain</tissue>
    </source>
</reference>
<reference key="10">
    <citation type="journal article" date="2009" name="Mol. Cell. Proteomics">
        <title>Large scale localization of protein phosphorylation by use of electron capture dissociation mass spectrometry.</title>
        <authorList>
            <person name="Sweet S.M."/>
            <person name="Bailey C.M."/>
            <person name="Cunningham D.L."/>
            <person name="Heath J.K."/>
            <person name="Cooper H.J."/>
        </authorList>
    </citation>
    <scope>IDENTIFICATION BY MASS SPECTROMETRY [LARGE SCALE ANALYSIS]</scope>
    <source>
        <tissue>Embryonic fibroblast</tissue>
    </source>
</reference>
<reference key="11">
    <citation type="journal article" date="2010" name="Cell">
        <title>A tissue-specific atlas of mouse protein phosphorylation and expression.</title>
        <authorList>
            <person name="Huttlin E.L."/>
            <person name="Jedrychowski M.P."/>
            <person name="Elias J.E."/>
            <person name="Goswami T."/>
            <person name="Rad R."/>
            <person name="Beausoleil S.A."/>
            <person name="Villen J."/>
            <person name="Haas W."/>
            <person name="Sowa M.E."/>
            <person name="Gygi S.P."/>
        </authorList>
    </citation>
    <scope>PHOSPHORYLATION [LARGE SCALE ANALYSIS] AT SER-241; THR-383; SER-385; SER-393; THR-394 AND SER-658</scope>
    <scope>IDENTIFICATION BY MASS SPECTROMETRY [LARGE SCALE ANALYSIS]</scope>
    <source>
        <tissue>Brain</tissue>
        <tissue>Brown adipose tissue</tissue>
        <tissue>Kidney</tissue>
        <tissue>Lung</tissue>
        <tissue>Pancreas</tissue>
        <tissue>Spleen</tissue>
        <tissue>Testis</tissue>
    </source>
</reference>
<reference key="12">
    <citation type="journal article" date="2014" name="J. Neurochem.">
        <title>Rufy3, a protein specifically expressed in neurons, interacts with actin-bundling protein Fascin to control the growth of axons.</title>
        <authorList>
            <person name="Wei Z."/>
            <person name="Sun M."/>
            <person name="Liu X."/>
            <person name="Zhang J."/>
            <person name="Jin Y."/>
        </authorList>
    </citation>
    <scope>INTERACTION WITH RUFY3</scope>
    <scope>SUBCELLULAR LOCATION</scope>
</reference>
<reference key="13">
    <citation type="journal article" date="2015" name="J. Neurochem.">
        <title>Drebrin depletion alters neurotransmitter receptor levels in protein complexes, dendritic spine morphogenesis and memory-related synaptic plasticity in the mouse hippocampus.</title>
        <authorList>
            <person name="Jung G."/>
            <person name="Kim E.J."/>
            <person name="Cicvaric A."/>
            <person name="Sase S."/>
            <person name="Groeger M."/>
            <person name="Hoeger H."/>
            <person name="Sialana F.J."/>
            <person name="Berger J."/>
            <person name="Monje F.J."/>
            <person name="Lubec G."/>
        </authorList>
    </citation>
    <scope>FUNCTION</scope>
    <scope>TISSUE SPECIFICITY</scope>
    <scope>DISRUPTION PHENOTYPE</scope>
</reference>
<evidence type="ECO:0000250" key="1">
    <source>
        <dbReference type="UniProtKB" id="Q07266"/>
    </source>
</evidence>
<evidence type="ECO:0000250" key="2">
    <source>
        <dbReference type="UniProtKB" id="Q16643"/>
    </source>
</evidence>
<evidence type="ECO:0000255" key="3">
    <source>
        <dbReference type="PROSITE-ProRule" id="PRU00599"/>
    </source>
</evidence>
<evidence type="ECO:0000256" key="4">
    <source>
        <dbReference type="SAM" id="MobiDB-lite"/>
    </source>
</evidence>
<evidence type="ECO:0000269" key="5">
    <source>
    </source>
</evidence>
<evidence type="ECO:0000269" key="6">
    <source>
    </source>
</evidence>
<evidence type="ECO:0000269" key="7">
    <source>
    </source>
</evidence>
<evidence type="ECO:0000269" key="8">
    <source ref="7"/>
</evidence>
<evidence type="ECO:0000303" key="9">
    <source>
    </source>
</evidence>
<evidence type="ECO:0000303" key="10">
    <source>
    </source>
</evidence>
<evidence type="ECO:0000303" key="11">
    <source>
    </source>
</evidence>
<evidence type="ECO:0000303" key="12">
    <source>
    </source>
</evidence>
<evidence type="ECO:0000305" key="13"/>
<evidence type="ECO:0007744" key="14">
    <source>
    </source>
</evidence>